<organism>
    <name type="scientific">Mus musculus</name>
    <name type="common">Mouse</name>
    <dbReference type="NCBI Taxonomy" id="10090"/>
    <lineage>
        <taxon>Eukaryota</taxon>
        <taxon>Metazoa</taxon>
        <taxon>Chordata</taxon>
        <taxon>Craniata</taxon>
        <taxon>Vertebrata</taxon>
        <taxon>Euteleostomi</taxon>
        <taxon>Mammalia</taxon>
        <taxon>Eutheria</taxon>
        <taxon>Euarchontoglires</taxon>
        <taxon>Glires</taxon>
        <taxon>Rodentia</taxon>
        <taxon>Myomorpha</taxon>
        <taxon>Muroidea</taxon>
        <taxon>Muridae</taxon>
        <taxon>Murinae</taxon>
        <taxon>Mus</taxon>
        <taxon>Mus</taxon>
    </lineage>
</organism>
<protein>
    <recommendedName>
        <fullName>Sorting nexin-1</fullName>
    </recommendedName>
</protein>
<keyword id="KW-0002">3D-structure</keyword>
<keyword id="KW-0007">Acetylation</keyword>
<keyword id="KW-0966">Cell projection</keyword>
<keyword id="KW-0967">Endosome</keyword>
<keyword id="KW-0333">Golgi apparatus</keyword>
<keyword id="KW-0446">Lipid-binding</keyword>
<keyword id="KW-0472">Membrane</keyword>
<keyword id="KW-0597">Phosphoprotein</keyword>
<keyword id="KW-0653">Protein transport</keyword>
<keyword id="KW-1185">Reference proteome</keyword>
<keyword id="KW-0813">Transport</keyword>
<dbReference type="EMBL" id="AF154120">
    <property type="protein sequence ID" value="AAD38805.1"/>
    <property type="molecule type" value="mRNA"/>
</dbReference>
<dbReference type="EMBL" id="AB019214">
    <property type="protein sequence ID" value="BAB20283.1"/>
    <property type="molecule type" value="mRNA"/>
</dbReference>
<dbReference type="RefSeq" id="NP_062701.2">
    <property type="nucleotide sequence ID" value="NM_019727.2"/>
</dbReference>
<dbReference type="PDB" id="7D6D">
    <property type="method" value="EM"/>
    <property type="resolution" value="9.00 A"/>
    <property type="chains" value="A/B/C/D/E/F/G/H/I/J/K/L/M/N/O/P=1-522"/>
</dbReference>
<dbReference type="PDB" id="7D6E">
    <property type="method" value="EM"/>
    <property type="resolution" value="10.00 A"/>
    <property type="chains" value="A/B/C/D/E/F/G/H/I/J/K/L/M/N/O/P/Q/R=1-522"/>
</dbReference>
<dbReference type="PDBsum" id="7D6D"/>
<dbReference type="PDBsum" id="7D6E"/>
<dbReference type="SMR" id="Q9WV80"/>
<dbReference type="BioGRID" id="207981">
    <property type="interactions" value="25"/>
</dbReference>
<dbReference type="FunCoup" id="Q9WV80">
    <property type="interactions" value="3470"/>
</dbReference>
<dbReference type="IntAct" id="Q9WV80">
    <property type="interactions" value="1"/>
</dbReference>
<dbReference type="STRING" id="10090.ENSMUSP00000034946"/>
<dbReference type="GlyGen" id="Q9WV80">
    <property type="glycosylation" value="2 sites, 1 N-linked glycan (1 site), 1 O-linked glycan (1 site)"/>
</dbReference>
<dbReference type="iPTMnet" id="Q9WV80"/>
<dbReference type="PhosphoSitePlus" id="Q9WV80"/>
<dbReference type="SwissPalm" id="Q9WV80"/>
<dbReference type="jPOST" id="Q9WV80"/>
<dbReference type="PaxDb" id="10090-ENSMUSP00000034946"/>
<dbReference type="PeptideAtlas" id="Q9WV80"/>
<dbReference type="ProteomicsDB" id="261597"/>
<dbReference type="Pumba" id="Q9WV80"/>
<dbReference type="DNASU" id="56440"/>
<dbReference type="GeneID" id="56440"/>
<dbReference type="KEGG" id="mmu:56440"/>
<dbReference type="AGR" id="MGI:1928395"/>
<dbReference type="CTD" id="6642"/>
<dbReference type="MGI" id="MGI:1928395">
    <property type="gene designation" value="Snx1"/>
</dbReference>
<dbReference type="eggNOG" id="KOG2273">
    <property type="taxonomic scope" value="Eukaryota"/>
</dbReference>
<dbReference type="InParanoid" id="Q9WV80"/>
<dbReference type="OrthoDB" id="271164at2759"/>
<dbReference type="PhylomeDB" id="Q9WV80"/>
<dbReference type="BioGRID-ORCS" id="56440">
    <property type="hits" value="2 hits in 76 CRISPR screens"/>
</dbReference>
<dbReference type="ChiTaRS" id="Snx1">
    <property type="organism name" value="mouse"/>
</dbReference>
<dbReference type="PRO" id="PR:Q9WV80"/>
<dbReference type="Proteomes" id="UP000000589">
    <property type="component" value="Unplaced"/>
</dbReference>
<dbReference type="RNAct" id="Q9WV80">
    <property type="molecule type" value="protein"/>
</dbReference>
<dbReference type="GO" id="GO:0005829">
    <property type="term" value="C:cytosol"/>
    <property type="evidence" value="ECO:0007669"/>
    <property type="project" value="GOC"/>
</dbReference>
<dbReference type="GO" id="GO:0043197">
    <property type="term" value="C:dendritic spine"/>
    <property type="evidence" value="ECO:0000314"/>
    <property type="project" value="SynGO-UCL"/>
</dbReference>
<dbReference type="GO" id="GO:0005769">
    <property type="term" value="C:early endosome"/>
    <property type="evidence" value="ECO:0000314"/>
    <property type="project" value="MGI"/>
</dbReference>
<dbReference type="GO" id="GO:0031901">
    <property type="term" value="C:early endosome membrane"/>
    <property type="evidence" value="ECO:0007669"/>
    <property type="project" value="UniProtKB-SubCell"/>
</dbReference>
<dbReference type="GO" id="GO:0005768">
    <property type="term" value="C:endosome"/>
    <property type="evidence" value="ECO:0000314"/>
    <property type="project" value="MGI"/>
</dbReference>
<dbReference type="GO" id="GO:0010008">
    <property type="term" value="C:endosome membrane"/>
    <property type="evidence" value="ECO:0000250"/>
    <property type="project" value="UniProtKB"/>
</dbReference>
<dbReference type="GO" id="GO:0098999">
    <property type="term" value="C:extrinsic component of postsynaptic endosome membrane"/>
    <property type="evidence" value="ECO:0000314"/>
    <property type="project" value="SynGO"/>
</dbReference>
<dbReference type="GO" id="GO:0005794">
    <property type="term" value="C:Golgi apparatus"/>
    <property type="evidence" value="ECO:0007669"/>
    <property type="project" value="UniProtKB-SubCell"/>
</dbReference>
<dbReference type="GO" id="GO:0030027">
    <property type="term" value="C:lamellipodium"/>
    <property type="evidence" value="ECO:0007669"/>
    <property type="project" value="UniProtKB-SubCell"/>
</dbReference>
<dbReference type="GO" id="GO:0016020">
    <property type="term" value="C:membrane"/>
    <property type="evidence" value="ECO:0000314"/>
    <property type="project" value="UniProtKB"/>
</dbReference>
<dbReference type="GO" id="GO:0048471">
    <property type="term" value="C:perinuclear region of cytoplasm"/>
    <property type="evidence" value="ECO:0000314"/>
    <property type="project" value="MGI"/>
</dbReference>
<dbReference type="GO" id="GO:0014069">
    <property type="term" value="C:postsynaptic density"/>
    <property type="evidence" value="ECO:0000314"/>
    <property type="project" value="SynGO-UCL"/>
</dbReference>
<dbReference type="GO" id="GO:0099092">
    <property type="term" value="C:postsynaptic density, intracellular component"/>
    <property type="evidence" value="ECO:0000314"/>
    <property type="project" value="SynGO-UCL"/>
</dbReference>
<dbReference type="GO" id="GO:0098793">
    <property type="term" value="C:presynapse"/>
    <property type="evidence" value="ECO:0000314"/>
    <property type="project" value="SynGO-UCL"/>
</dbReference>
<dbReference type="GO" id="GO:0035091">
    <property type="term" value="F:phosphatidylinositol binding"/>
    <property type="evidence" value="ECO:0000250"/>
    <property type="project" value="UniProtKB"/>
</dbReference>
<dbReference type="GO" id="GO:0006886">
    <property type="term" value="P:intracellular protein transport"/>
    <property type="evidence" value="ECO:0007669"/>
    <property type="project" value="InterPro"/>
</dbReference>
<dbReference type="GO" id="GO:0072673">
    <property type="term" value="P:lamellipodium morphogenesis"/>
    <property type="evidence" value="ECO:0000250"/>
    <property type="project" value="UniProtKB"/>
</dbReference>
<dbReference type="GO" id="GO:0030512">
    <property type="term" value="P:negative regulation of transforming growth factor beta receptor signaling pathway"/>
    <property type="evidence" value="ECO:0000314"/>
    <property type="project" value="MGI"/>
</dbReference>
<dbReference type="GO" id="GO:0031175">
    <property type="term" value="P:neuron projection development"/>
    <property type="evidence" value="ECO:0000314"/>
    <property type="project" value="SynGO-UCL"/>
</dbReference>
<dbReference type="GO" id="GO:0031623">
    <property type="term" value="P:receptor internalization"/>
    <property type="evidence" value="ECO:0000250"/>
    <property type="project" value="UniProtKB"/>
</dbReference>
<dbReference type="GO" id="GO:0042147">
    <property type="term" value="P:retrograde transport, endosome to Golgi"/>
    <property type="evidence" value="ECO:0000250"/>
    <property type="project" value="UniProtKB"/>
</dbReference>
<dbReference type="CDD" id="cd07665">
    <property type="entry name" value="BAR_SNX1"/>
    <property type="match status" value="1"/>
</dbReference>
<dbReference type="CDD" id="cd07281">
    <property type="entry name" value="PX_SNX1"/>
    <property type="match status" value="1"/>
</dbReference>
<dbReference type="FunFam" id="3.30.1520.10:FF:000015">
    <property type="entry name" value="Sorting nexin 1"/>
    <property type="match status" value="1"/>
</dbReference>
<dbReference type="FunFam" id="1.20.1270.60:FF:000012">
    <property type="entry name" value="Sorting nexin 2"/>
    <property type="match status" value="1"/>
</dbReference>
<dbReference type="Gene3D" id="1.20.1270.60">
    <property type="entry name" value="Arfaptin homology (AH) domain/BAR domain"/>
    <property type="match status" value="1"/>
</dbReference>
<dbReference type="Gene3D" id="3.30.1520.10">
    <property type="entry name" value="Phox-like domain"/>
    <property type="match status" value="1"/>
</dbReference>
<dbReference type="InterPro" id="IPR027267">
    <property type="entry name" value="AH/BAR_dom_sf"/>
</dbReference>
<dbReference type="InterPro" id="IPR001683">
    <property type="entry name" value="PX_dom"/>
</dbReference>
<dbReference type="InterPro" id="IPR036871">
    <property type="entry name" value="PX_dom_sf"/>
</dbReference>
<dbReference type="InterPro" id="IPR034901">
    <property type="entry name" value="PX_SNX1"/>
</dbReference>
<dbReference type="InterPro" id="IPR028660">
    <property type="entry name" value="SNX1_BAR"/>
</dbReference>
<dbReference type="InterPro" id="IPR005329">
    <property type="entry name" value="Sorting_nexin_N"/>
</dbReference>
<dbReference type="InterPro" id="IPR015404">
    <property type="entry name" value="Vps5_C"/>
</dbReference>
<dbReference type="PANTHER" id="PTHR10555">
    <property type="entry name" value="SORTING NEXIN"/>
    <property type="match status" value="1"/>
</dbReference>
<dbReference type="PANTHER" id="PTHR10555:SF129">
    <property type="entry name" value="SORTING NEXIN-1"/>
    <property type="match status" value="1"/>
</dbReference>
<dbReference type="Pfam" id="PF00787">
    <property type="entry name" value="PX"/>
    <property type="match status" value="1"/>
</dbReference>
<dbReference type="Pfam" id="PF03700">
    <property type="entry name" value="Sorting_nexin"/>
    <property type="match status" value="1"/>
</dbReference>
<dbReference type="Pfam" id="PF09325">
    <property type="entry name" value="Vps5"/>
    <property type="match status" value="1"/>
</dbReference>
<dbReference type="SMART" id="SM00312">
    <property type="entry name" value="PX"/>
    <property type="match status" value="1"/>
</dbReference>
<dbReference type="SUPFAM" id="SSF103657">
    <property type="entry name" value="BAR/IMD domain-like"/>
    <property type="match status" value="1"/>
</dbReference>
<dbReference type="SUPFAM" id="SSF64268">
    <property type="entry name" value="PX domain"/>
    <property type="match status" value="1"/>
</dbReference>
<dbReference type="PROSITE" id="PS50195">
    <property type="entry name" value="PX"/>
    <property type="match status" value="1"/>
</dbReference>
<sequence>MASGGGGCSASERLPPPFPGMDPESEGAAGASEPEAGDSDTEGEDIFTGAAAATKPQSPKKTTSLFPIKNGSKENGIHEDQDQEPQDLFADATVELSLDSTQNNQKTMPGKTLTSHSPQEATNSPKPQPSYEELEEEEQEDQFDLTVGITDPEKIGDGMNAYVAYKVTTQTSLPMFRSRQFAVKRRFSDFLGLYEKLSEKHSQNGFIVPPPPEKSLIGMTKVKVGKEDSSSAEFLEKRRAALERYLQRIVNHPTMLQDPDVREFLEKEELPRAVGTQALSGAGLLKMFNKATDAVSKMTIKMNESDIWFEEKLQEVECEEQRLRKLHAVVETLVNHRKELALNTALFAKSLAMLGSSEDNTALSRALSQLAEVEEKIEQLHQEQANNDSFLLAELLSDYIRLLAIVRAAFDQRMKTWQRWQDAQATLQKKRESEARLLWANKPDKLQQAKDEITEWESRVTQYERDFERISTVVRKEVTRFEKEKSKDFKNHVMKYLETLLHSQQQLAKYWEAFLPEAKAIS</sequence>
<evidence type="ECO:0000250" key="1"/>
<evidence type="ECO:0000250" key="2">
    <source>
        <dbReference type="UniProtKB" id="Q13596"/>
    </source>
</evidence>
<evidence type="ECO:0000250" key="3">
    <source>
        <dbReference type="UniProtKB" id="Q96L94"/>
    </source>
</evidence>
<evidence type="ECO:0000250" key="4">
    <source>
        <dbReference type="UniProtKB" id="Q99N27"/>
    </source>
</evidence>
<evidence type="ECO:0000255" key="5">
    <source>
        <dbReference type="PROSITE-ProRule" id="PRU00147"/>
    </source>
</evidence>
<evidence type="ECO:0000256" key="6">
    <source>
        <dbReference type="SAM" id="MobiDB-lite"/>
    </source>
</evidence>
<evidence type="ECO:0000269" key="7">
    <source>
    </source>
</evidence>
<evidence type="ECO:0000305" key="8"/>
<evidence type="ECO:0007744" key="9">
    <source>
    </source>
</evidence>
<evidence type="ECO:0007744" key="10">
    <source>
    </source>
</evidence>
<gene>
    <name type="primary">Snx1</name>
</gene>
<proteinExistence type="evidence at protein level"/>
<feature type="chain" id="PRO_0000213836" description="Sorting nexin-1">
    <location>
        <begin position="1"/>
        <end position="522"/>
    </location>
</feature>
<feature type="domain" description="PX" evidence="5">
    <location>
        <begin position="143"/>
        <end position="272"/>
    </location>
</feature>
<feature type="domain" description="BAR">
    <location>
        <begin position="302"/>
        <end position="522"/>
    </location>
</feature>
<feature type="region of interest" description="Disordered" evidence="6">
    <location>
        <begin position="1"/>
        <end position="144"/>
    </location>
</feature>
<feature type="region of interest" description="Membrane-binding amphipathic helix" evidence="2">
    <location>
        <begin position="281"/>
        <end position="298"/>
    </location>
</feature>
<feature type="compositionally biased region" description="Acidic residues" evidence="6">
    <location>
        <begin position="35"/>
        <end position="45"/>
    </location>
</feature>
<feature type="compositionally biased region" description="Polar residues" evidence="6">
    <location>
        <begin position="55"/>
        <end position="65"/>
    </location>
</feature>
<feature type="compositionally biased region" description="Basic and acidic residues" evidence="6">
    <location>
        <begin position="71"/>
        <end position="80"/>
    </location>
</feature>
<feature type="compositionally biased region" description="Polar residues" evidence="6">
    <location>
        <begin position="98"/>
        <end position="125"/>
    </location>
</feature>
<feature type="compositionally biased region" description="Acidic residues" evidence="6">
    <location>
        <begin position="132"/>
        <end position="143"/>
    </location>
</feature>
<feature type="binding site" evidence="3">
    <location>
        <position position="186"/>
    </location>
    <ligand>
        <name>a 1,2-diacyl-sn-glycero-3-phospho-(1D-myo-inositol-3-phosphate)</name>
        <dbReference type="ChEBI" id="CHEBI:58088"/>
    </ligand>
</feature>
<feature type="binding site" evidence="3">
    <location>
        <position position="188"/>
    </location>
    <ligand>
        <name>a 1,2-diacyl-sn-glycero-3-phospho-(1D-myo-inositol-3-phosphate)</name>
        <dbReference type="ChEBI" id="CHEBI:58088"/>
    </ligand>
</feature>
<feature type="binding site" evidence="3">
    <location>
        <position position="214"/>
    </location>
    <ligand>
        <name>a 1,2-diacyl-sn-glycero-3-phospho-(1D-myo-inositol-3-phosphate)</name>
        <dbReference type="ChEBI" id="CHEBI:58088"/>
    </ligand>
</feature>
<feature type="binding site" evidence="3">
    <location>
        <position position="238"/>
    </location>
    <ligand>
        <name>a 1,2-diacyl-sn-glycero-3-phospho-(1D-myo-inositol-3-phosphate)</name>
        <dbReference type="ChEBI" id="CHEBI:58088"/>
    </ligand>
</feature>
<feature type="modified residue" description="Phosphoserine" evidence="10">
    <location>
        <position position="32"/>
    </location>
</feature>
<feature type="modified residue" description="Phosphoserine" evidence="10">
    <location>
        <position position="39"/>
    </location>
</feature>
<feature type="modified residue" description="Phosphothreonine" evidence="10">
    <location>
        <position position="41"/>
    </location>
</feature>
<feature type="modified residue" description="Phosphothreonine" evidence="2">
    <location>
        <position position="48"/>
    </location>
</feature>
<feature type="modified residue" description="Phosphoserine" evidence="10">
    <location>
        <position position="58"/>
    </location>
</feature>
<feature type="modified residue" description="Phosphoserine" evidence="2">
    <location>
        <position position="72"/>
    </location>
</feature>
<feature type="modified residue" description="Phosphoserine" evidence="9 10">
    <location>
        <position position="188"/>
    </location>
</feature>
<feature type="modified residue" description="N6-acetyllysine" evidence="2">
    <location>
        <position position="237"/>
    </location>
</feature>
<feature type="modified residue" description="Phosphoserine" evidence="2">
    <location>
        <position position="280"/>
    </location>
</feature>
<feature type="sequence conflict" description="In Ref. 2; BAB20283." evidence="8" ref="2">
    <original>A</original>
    <variation>G</variation>
    <location>
        <position position="31"/>
    </location>
</feature>
<feature type="sequence conflict" description="In Ref. 2; BAB20283." evidence="8" ref="2">
    <original>S</original>
    <variation>P</variation>
    <location>
        <position position="117"/>
    </location>
</feature>
<feature type="sequence conflict" description="In Ref. 2; BAB20283." evidence="8" ref="2">
    <original>S</original>
    <variation>C</variation>
    <location>
        <position position="124"/>
    </location>
</feature>
<feature type="sequence conflict" description="In Ref. 2; BAB20283." evidence="8" ref="2">
    <location>
        <position position="138"/>
    </location>
</feature>
<feature type="sequence conflict" description="In Ref. 2; BAB20283." evidence="8" ref="2">
    <original>S</original>
    <variation>F</variation>
    <location>
        <position position="389"/>
    </location>
</feature>
<accession>Q9WV80</accession>
<accession>Q9EQZ9</accession>
<reference key="1">
    <citation type="submission" date="1999-05" db="EMBL/GenBank/DDBJ databases">
        <title>Complete sequence of mouse sorting nexin 1 (Snx1) cDNA.</title>
        <authorList>
            <person name="Takahara K."/>
            <person name="Omatsu Y."/>
            <person name="Maeda Y."/>
            <person name="Shimoyama S."/>
            <person name="Inaba K."/>
        </authorList>
    </citation>
    <scope>NUCLEOTIDE SEQUENCE [MRNA]</scope>
    <source>
        <tissue>Thymus</tissue>
    </source>
</reference>
<reference key="2">
    <citation type="journal article" date="2001" name="J. Biochem.">
        <title>Association of mouse sorting nexin 1 with early endosomes.</title>
        <authorList>
            <person name="Nakamura N."/>
            <person name="Sun-Wada G.H."/>
            <person name="Yamamoto A."/>
            <person name="Wada Y."/>
            <person name="Futai M."/>
        </authorList>
    </citation>
    <scope>NUCLEOTIDE SEQUENCE [MRNA]</scope>
    <scope>SUBUNIT</scope>
    <source>
        <strain>C57BL/6J</strain>
    </source>
</reference>
<reference key="3">
    <citation type="journal article" date="2002" name="Mol. Biol. Cell">
        <title>Genetic analysis of sorting nexins 1 and 2 reveals a redundant and essential function in mice.</title>
        <authorList>
            <person name="Schwarz D.G."/>
            <person name="Griffin C.T."/>
            <person name="Schneider E.A."/>
            <person name="Yee D."/>
            <person name="Magnuson T."/>
        </authorList>
    </citation>
    <scope>DISRUPTION PHENOTYPE</scope>
</reference>
<reference key="4">
    <citation type="journal article" date="2007" name="Proc. Natl. Acad. Sci. U.S.A.">
        <title>Large-scale phosphorylation analysis of mouse liver.</title>
        <authorList>
            <person name="Villen J."/>
            <person name="Beausoleil S.A."/>
            <person name="Gerber S.A."/>
            <person name="Gygi S.P."/>
        </authorList>
    </citation>
    <scope>PHOSPHORYLATION [LARGE SCALE ANALYSIS] AT SER-188</scope>
    <scope>IDENTIFICATION BY MASS SPECTROMETRY [LARGE SCALE ANALYSIS]</scope>
    <source>
        <tissue>Liver</tissue>
    </source>
</reference>
<reference key="5">
    <citation type="journal article" date="2010" name="Cell">
        <title>A tissue-specific atlas of mouse protein phosphorylation and expression.</title>
        <authorList>
            <person name="Huttlin E.L."/>
            <person name="Jedrychowski M.P."/>
            <person name="Elias J.E."/>
            <person name="Goswami T."/>
            <person name="Rad R."/>
            <person name="Beausoleil S.A."/>
            <person name="Villen J."/>
            <person name="Haas W."/>
            <person name="Sowa M.E."/>
            <person name="Gygi S.P."/>
        </authorList>
    </citation>
    <scope>PHOSPHORYLATION [LARGE SCALE ANALYSIS] AT SER-32; SER-39; THR-41; SER-58 AND SER-188</scope>
    <scope>IDENTIFICATION BY MASS SPECTROMETRY [LARGE SCALE ANALYSIS]</scope>
    <source>
        <tissue>Brain</tissue>
        <tissue>Brown adipose tissue</tissue>
        <tissue>Heart</tissue>
        <tissue>Kidney</tissue>
        <tissue>Lung</tissue>
        <tissue>Pancreas</tissue>
        <tissue>Spleen</tissue>
        <tissue>Testis</tissue>
    </source>
</reference>
<comment type="function">
    <text evidence="2">Involved in several stages of intracellular trafficking. Interacts with membranes containing phosphatidylinositol 3-phosphate (PtdIns(3P)) or phosphatidylinositol 3,5-bisphosphate (PtdIns(3,5)P2). Acts in part as component of the retromer membrane-deforming SNX-BAR subcomplex. The SNX-BAR retromer mediates retrograde transport of cargo proteins from endosomes to the trans-Golgi network (TGN) and is involved in endosome-to-plasma membrane transport for cargo protein recycling. The SNX-BAR subcomplex functions to deform the donor membrane into a tubular profile called endosome-to-TGN transport carrier (ETC). Can sense membrane curvature and has in vitro vesicle-to-membrane remodeling activity. Involved in retrograde endosome-to-TGN transport of lysosomal enzyme receptors (IGF2R, M6PR and SORT1). Plays a role in targeting ligand-activated EGFR to the lysosomes for degradation after endocytosis from the cell surface and release from the Golgi. Involvement in retromer-independent endocytic trafficking of P2RY1 and lysosomal degradation of protease-activated receptor-1/F2R. Promotes KALRN- and RHOG-dependent but retromer-independent membrane remodeling such as lamellipodium formation; the function is dependent on GEF activity of KALRN. Required for endocytosis of DRD5 upon agonist stimulation but not for basal receptor trafficking (By similarity).</text>
</comment>
<comment type="subunit">
    <text evidence="2 4">Predominantly forms heterodimers with BAR domain-containing sorting nexins SNX5, SNX6 and SNX32 (By similarity). Can self-associate to form homodimers (PubMed:11726276). The heterodimers are proposed to self-assemble into helical arrays on the membrane to stabilize and expand local membrane curvature underlying endosomal tubule formation. Thought to be a component of the originally described retromer complex (also called SNX-BAR retromer) which is a pentamer containing the heterotrimeric retromer cargo-selective complex (CSC), also described as vacuolar protein sorting subcomplex (VPS) and a heterodimeric membrane-deforming subcomplex formed between SNX1 or SNX2 and SNX5 or SNX6 (also called SNX-BAR subcomplex); the respective CSC and SNX-BAR subcomplexes associate with low affinity. Interacts with SNX5, SNX6, SNX32, VPS26A, VPS29, VPS35, DRD5, DENND5A, KALRN, RHOG (GDP-bound form). The interaction with SNX2 is reported controversially. Interacts with DNAJC13; prevented by presence of HGS. Interacts with HGS (By similarity).</text>
</comment>
<comment type="subcellular location">
    <subcellularLocation>
        <location evidence="2">Endosome membrane</location>
        <topology>Peripheral membrane protein</topology>
        <orientation>Cytoplasmic side</orientation>
    </subcellularLocation>
    <subcellularLocation>
        <location evidence="8">Golgi apparatus</location>
        <location evidence="8">trans-Golgi network membrane</location>
        <topology evidence="8">Peripheral membrane protein</topology>
        <orientation evidence="8">Cytoplasmic side</orientation>
    </subcellularLocation>
    <subcellularLocation>
        <location>Early endosome membrane</location>
        <topology>Peripheral membrane protein</topology>
        <orientation>Cytoplasmic side</orientation>
    </subcellularLocation>
    <subcellularLocation>
        <location evidence="2">Cell projection</location>
        <location evidence="2">Lamellipodium</location>
    </subcellularLocation>
    <text evidence="2">Enriched on tubular elements of the early endosome membrane. Binds preferentially to highly curved membranes enriched in phosphatidylinositol 3-phosphate (PtdIns(3P)) or phosphatidylinositol 3,5-bisphosphate (PtdIns(3,5)P2). Colocalized with SORT1 to tubular endosomal membrane structures called endosome-to-TGN transport carriers (ETCs) which are budding from early endosome vacuoles just before maturing into late endosome vacuoles. Colocalized with F-actin at the leading edge of lamellipodia in a KALRN-dependent manner.</text>
</comment>
<comment type="domain">
    <text evidence="2">The BAR domain is able to sense membrane curvature upon dimerization. Membrane remodeling seems to implicate insertion of a N-terminal amphipathic helix (AH) in the membrane (By similarity).</text>
</comment>
<comment type="disruption phenotype">
    <text evidence="7">No visible phenotype. Mice are born at the expected Mendelian ratio and are fertile. Mice lacking both Snx1 and Snx2 die during embryonic development, around 9.5 and 11.5 dpc.</text>
</comment>
<comment type="miscellaneous">
    <text evidence="1">Binds phosphatidylinositol 3-phosphate (PtdIns-(3)P) and phosphatidylinositol 3,5-bisphosphate (PtdIns-(3,5)P2) in liposome-based assays. Can bind PtdIns(3,4,5)P3 in protein:lipid overlay assays, but not in liposome-based assays (By similarity).</text>
</comment>
<comment type="similarity">
    <text evidence="8">Belongs to the sorting nexin family.</text>
</comment>
<name>SNX1_MOUSE</name>